<evidence type="ECO:0000250" key="1"/>
<evidence type="ECO:0000305" key="2"/>
<gene>
    <name type="primary">sopB</name>
    <name type="synonym">sigD</name>
    <name type="ordered locus">STY1121</name>
    <name type="ordered locus">t1828</name>
</gene>
<dbReference type="EC" id="3.1.3.-"/>
<dbReference type="EMBL" id="AL513382">
    <property type="protein sequence ID" value="CAD08217.1"/>
    <property type="molecule type" value="Genomic_DNA"/>
</dbReference>
<dbReference type="EMBL" id="AE014613">
    <property type="protein sequence ID" value="AAO69449.1"/>
    <property type="molecule type" value="Genomic_DNA"/>
</dbReference>
<dbReference type="EMBL" id="AF213333">
    <property type="protein sequence ID" value="AAF21055.1"/>
    <property type="molecule type" value="Genomic_DNA"/>
</dbReference>
<dbReference type="RefSeq" id="NP_455588.1">
    <property type="nucleotide sequence ID" value="NC_003198.1"/>
</dbReference>
<dbReference type="RefSeq" id="WP_001166955.1">
    <property type="nucleotide sequence ID" value="NZ_WSUR01000018.1"/>
</dbReference>
<dbReference type="SMR" id="Q8Z7R1"/>
<dbReference type="STRING" id="220341.gene:17585096"/>
<dbReference type="KEGG" id="stt:t1828"/>
<dbReference type="KEGG" id="sty:STY1121"/>
<dbReference type="PATRIC" id="fig|220341.7.peg.1124"/>
<dbReference type="eggNOG" id="ENOG502Z7Z8">
    <property type="taxonomic scope" value="Bacteria"/>
</dbReference>
<dbReference type="HOGENOM" id="CLU_025781_0_0_6"/>
<dbReference type="OMA" id="PCWNCKS"/>
<dbReference type="OrthoDB" id="22047at2"/>
<dbReference type="Proteomes" id="UP000000541">
    <property type="component" value="Chromosome"/>
</dbReference>
<dbReference type="Proteomes" id="UP000002670">
    <property type="component" value="Chromosome"/>
</dbReference>
<dbReference type="GO" id="GO:0005576">
    <property type="term" value="C:extracellular region"/>
    <property type="evidence" value="ECO:0007669"/>
    <property type="project" value="UniProtKB-SubCell"/>
</dbReference>
<dbReference type="GO" id="GO:0016791">
    <property type="term" value="F:phosphatase activity"/>
    <property type="evidence" value="ECO:0007669"/>
    <property type="project" value="InterPro"/>
</dbReference>
<dbReference type="Gene3D" id="1.20.58.450">
    <property type="entry name" value="Cell division control protein 42 homolog"/>
    <property type="match status" value="1"/>
</dbReference>
<dbReference type="InterPro" id="IPR008108">
    <property type="entry name" value="IpgD/SopB"/>
</dbReference>
<dbReference type="NCBIfam" id="NF011905">
    <property type="entry name" value="PRK15378.1"/>
    <property type="match status" value="1"/>
</dbReference>
<dbReference type="Pfam" id="PF05925">
    <property type="entry name" value="IpgD"/>
    <property type="match status" value="1"/>
</dbReference>
<dbReference type="PRINTS" id="PR01734">
    <property type="entry name" value="TYPE3OMBPROT"/>
</dbReference>
<sequence>MQIQSFYHSASLKTQEAFKSLQKTLYNGMQILSGQGKAPAKAPDARPEIIVLREPGATWGNYLQHQKTSNHSLHNLYNLQRDLLTVAATVLGKQDPVLTSMANQMELAKVKADRPATKQEEAAAKALKKNLIELIAARTQQQNGLPAKEAHRFAAVAFRDAQVKQLNNQPWQTIKNTLTHNGHHYTNTQLPAAEMKIGAKDIFPSAYEGKGVCSWDTKNIHHANNLWMSTVSVHEDGKDKTLFCGIRHGVLSPYHEKDPLLRQAGAENKAKEVLAAALFSKPELLNRALEGEAVSLKLVSVGLLTASNIFGKEGTMVEDQMRAWQSLTQPGKMIHLKIRNKDGDLQTVKIKPDVAAFNVGVNELALKLGFGLKASDSYNAEALHQLLGNDLRPEARPGGWVGEWLAQYPDNYEVVNTLARQIKDIWKNNQHHKDGGEPYKLAQRLAMLAHEIDAVPAWNCKSGKDRTGMMDSEIKRELISFHQTHMLSAPGSLPDSGGQKIFQKVLLNSGNLEIQKQNTGGAGNKVMKNLSPEVLNLSYQKRVGDENIWQSVKGISSLITS</sequence>
<organism>
    <name type="scientific">Salmonella typhi</name>
    <dbReference type="NCBI Taxonomy" id="90370"/>
    <lineage>
        <taxon>Bacteria</taxon>
        <taxon>Pseudomonadati</taxon>
        <taxon>Pseudomonadota</taxon>
        <taxon>Gammaproteobacteria</taxon>
        <taxon>Enterobacterales</taxon>
        <taxon>Enterobacteriaceae</taxon>
        <taxon>Salmonella</taxon>
    </lineage>
</organism>
<feature type="chain" id="PRO_0000220494" description="Inositol phosphate phosphatase SopB">
    <location>
        <begin position="1"/>
        <end position="561"/>
    </location>
</feature>
<feature type="short sequence motif" description="CX5R motif">
    <location>
        <begin position="460"/>
        <end position="466"/>
    </location>
</feature>
<feature type="active site" evidence="2">
    <location>
        <position position="460"/>
    </location>
</feature>
<feature type="sequence conflict" description="In Ref. 3; AAF21055." evidence="2" ref="3">
    <original>K</original>
    <variation>H</variation>
    <location>
        <position position="528"/>
    </location>
</feature>
<reference key="1">
    <citation type="journal article" date="2001" name="Nature">
        <title>Complete genome sequence of a multiple drug resistant Salmonella enterica serovar Typhi CT18.</title>
        <authorList>
            <person name="Parkhill J."/>
            <person name="Dougan G."/>
            <person name="James K.D."/>
            <person name="Thomson N.R."/>
            <person name="Pickard D."/>
            <person name="Wain J."/>
            <person name="Churcher C.M."/>
            <person name="Mungall K.L."/>
            <person name="Bentley S.D."/>
            <person name="Holden M.T.G."/>
            <person name="Sebaihia M."/>
            <person name="Baker S."/>
            <person name="Basham D."/>
            <person name="Brooks K."/>
            <person name="Chillingworth T."/>
            <person name="Connerton P."/>
            <person name="Cronin A."/>
            <person name="Davis P."/>
            <person name="Davies R.M."/>
            <person name="Dowd L."/>
            <person name="White N."/>
            <person name="Farrar J."/>
            <person name="Feltwell T."/>
            <person name="Hamlin N."/>
            <person name="Haque A."/>
            <person name="Hien T.T."/>
            <person name="Holroyd S."/>
            <person name="Jagels K."/>
            <person name="Krogh A."/>
            <person name="Larsen T.S."/>
            <person name="Leather S."/>
            <person name="Moule S."/>
            <person name="O'Gaora P."/>
            <person name="Parry C."/>
            <person name="Quail M.A."/>
            <person name="Rutherford K.M."/>
            <person name="Simmonds M."/>
            <person name="Skelton J."/>
            <person name="Stevens K."/>
            <person name="Whitehead S."/>
            <person name="Barrell B.G."/>
        </authorList>
    </citation>
    <scope>NUCLEOTIDE SEQUENCE [LARGE SCALE GENOMIC DNA]</scope>
    <source>
        <strain>CT18</strain>
    </source>
</reference>
<reference key="2">
    <citation type="journal article" date="2003" name="J. Bacteriol.">
        <title>Comparative genomics of Salmonella enterica serovar Typhi strains Ty2 and CT18.</title>
        <authorList>
            <person name="Deng W."/>
            <person name="Liou S.-R."/>
            <person name="Plunkett G. III"/>
            <person name="Mayhew G.F."/>
            <person name="Rose D.J."/>
            <person name="Burland V."/>
            <person name="Kodoyianni V."/>
            <person name="Schwartz D.C."/>
            <person name="Blattner F.R."/>
        </authorList>
    </citation>
    <scope>NUCLEOTIDE SEQUENCE [LARGE SCALE GENOMIC DNA]</scope>
    <source>
        <strain>ATCC 700931 / Ty2</strain>
    </source>
</reference>
<reference key="3">
    <citation type="journal article" date="2000" name="Int. J. Med. Microbiol.">
        <title>Prevalence and polymorphism of genes encoding translocated effector proteins among clinical isolates of Salmonella enterica.</title>
        <authorList>
            <person name="Prager R."/>
            <person name="Mirold S."/>
            <person name="Tietze E."/>
            <person name="Strutz U."/>
            <person name="Knuppel B."/>
            <person name="Rabsch W."/>
            <person name="Hardt W.-D."/>
            <person name="Tschape H."/>
        </authorList>
    </citation>
    <scope>NUCLEOTIDE SEQUENCE [GENOMIC DNA] OF 97-529</scope>
    <source>
        <strain>IE1537</strain>
    </source>
</reference>
<accession>Q8Z7R1</accession>
<accession>Q7C973</accession>
<accession>Q9RER3</accession>
<protein>
    <recommendedName>
        <fullName>Inositol phosphate phosphatase SopB</fullName>
        <ecNumber>3.1.3.-</ecNumber>
    </recommendedName>
    <alternativeName>
        <fullName>Effector protein SopB</fullName>
    </alternativeName>
</protein>
<comment type="function">
    <text evidence="1">Converts phosphatidylinositol 3,4,5-trisphosphate (PtdIns 3,4,5-P3) to PtdIns 3-P and prevents the transition of PtdIns 3-P to PtdIns 3,5-P2. It is one of the known effectors injected by Salmonella into the host cell and is required for invasion and for an efficient generation and maintenance of Salmonella-containing vacuole (SVC). Alteration of the phosphoinositide composition of the plasma membrane causes membrane ruffling and actin cytoskeleton rearrangements. The persistence of PtdIns 3-P diverts the SCV from the endocytic pathway resulting in enlarged vesicles, which are essential to create a favorable environment where Salmonella can replicate and avoid immune defenses of the host cell (By similarity).</text>
</comment>
<comment type="subcellular location">
    <subcellularLocation>
        <location evidence="1">Secreted</location>
    </subcellularLocation>
    <text evidence="1">Secreted via the type III secretion system 1 (SPI-1 T3SS).</text>
</comment>
<comment type="domain">
    <text evidence="1">Contains the consensus sequence Cys-X(5)-Arg characteristic of Mg-independent phosphatases.</text>
</comment>
<comment type="similarity">
    <text evidence="2">Belongs to the phosphatase IpgD/SopB family.</text>
</comment>
<name>SOPB_SALTI</name>
<proteinExistence type="inferred from homology"/>
<keyword id="KW-0378">Hydrolase</keyword>
<keyword id="KW-0964">Secreted</keyword>
<keyword id="KW-0843">Virulence</keyword>